<sequence>MRAVVQRVKSARVKVNGKSVGAINKGLLVLLGVAPEDTSKEVEYLAKKIVGLRIFEDDNGKMNLSLDEVGGEMLVVSQFTLYGDCRKGRRPSFVGAAPPELAEKLYEEFVNVVDLLGIKTETGKFGAMMDVSLVNQGPVTLIVESK</sequence>
<evidence type="ECO:0000255" key="1">
    <source>
        <dbReference type="HAMAP-Rule" id="MF_00518"/>
    </source>
</evidence>
<reference key="1">
    <citation type="journal article" date="2012" name="Environ. Microbiol.">
        <title>The genome sequence of Desulfatibacillum alkenivorans AK-01: a blueprint for anaerobic alkane oxidation.</title>
        <authorList>
            <person name="Callaghan A.V."/>
            <person name="Morris B.E."/>
            <person name="Pereira I.A."/>
            <person name="McInerney M.J."/>
            <person name="Austin R.N."/>
            <person name="Groves J.T."/>
            <person name="Kukor J.J."/>
            <person name="Suflita J.M."/>
            <person name="Young L.Y."/>
            <person name="Zylstra G.J."/>
            <person name="Wawrik B."/>
        </authorList>
    </citation>
    <scope>NUCLEOTIDE SEQUENCE [LARGE SCALE GENOMIC DNA]</scope>
    <source>
        <strain>AK-01</strain>
    </source>
</reference>
<accession>B8FHU4</accession>
<gene>
    <name evidence="1" type="primary">dtd</name>
    <name type="ordered locus">Dalk_0806</name>
</gene>
<name>DTD_DESAL</name>
<proteinExistence type="inferred from homology"/>
<feature type="chain" id="PRO_1000127516" description="D-aminoacyl-tRNA deacylase">
    <location>
        <begin position="1"/>
        <end position="146"/>
    </location>
</feature>
<feature type="short sequence motif" description="Gly-cisPro motif, important for rejection of L-amino acids" evidence="1">
    <location>
        <begin position="137"/>
        <end position="138"/>
    </location>
</feature>
<protein>
    <recommendedName>
        <fullName evidence="1">D-aminoacyl-tRNA deacylase</fullName>
        <shortName evidence="1">DTD</shortName>
        <ecNumber evidence="1">3.1.1.96</ecNumber>
    </recommendedName>
    <alternativeName>
        <fullName evidence="1">Gly-tRNA(Ala) deacylase</fullName>
    </alternativeName>
</protein>
<dbReference type="EC" id="3.1.1.96" evidence="1"/>
<dbReference type="EMBL" id="CP001322">
    <property type="protein sequence ID" value="ACL02511.1"/>
    <property type="molecule type" value="Genomic_DNA"/>
</dbReference>
<dbReference type="RefSeq" id="WP_012609950.1">
    <property type="nucleotide sequence ID" value="NC_011768.1"/>
</dbReference>
<dbReference type="SMR" id="B8FHU4"/>
<dbReference type="KEGG" id="dal:Dalk_0806"/>
<dbReference type="eggNOG" id="COG1490">
    <property type="taxonomic scope" value="Bacteria"/>
</dbReference>
<dbReference type="HOGENOM" id="CLU_076901_1_0_7"/>
<dbReference type="Proteomes" id="UP000000739">
    <property type="component" value="Chromosome"/>
</dbReference>
<dbReference type="GO" id="GO:0005737">
    <property type="term" value="C:cytoplasm"/>
    <property type="evidence" value="ECO:0007669"/>
    <property type="project" value="UniProtKB-SubCell"/>
</dbReference>
<dbReference type="GO" id="GO:0051500">
    <property type="term" value="F:D-tyrosyl-tRNA(Tyr) deacylase activity"/>
    <property type="evidence" value="ECO:0007669"/>
    <property type="project" value="TreeGrafter"/>
</dbReference>
<dbReference type="GO" id="GO:0106026">
    <property type="term" value="F:Gly-tRNA(Ala) deacylase activity"/>
    <property type="evidence" value="ECO:0007669"/>
    <property type="project" value="UniProtKB-UniRule"/>
</dbReference>
<dbReference type="GO" id="GO:0043908">
    <property type="term" value="F:Ser(Gly)-tRNA(Ala) hydrolase activity"/>
    <property type="evidence" value="ECO:0007669"/>
    <property type="project" value="UniProtKB-UniRule"/>
</dbReference>
<dbReference type="GO" id="GO:0000049">
    <property type="term" value="F:tRNA binding"/>
    <property type="evidence" value="ECO:0007669"/>
    <property type="project" value="UniProtKB-UniRule"/>
</dbReference>
<dbReference type="GO" id="GO:0019478">
    <property type="term" value="P:D-amino acid catabolic process"/>
    <property type="evidence" value="ECO:0007669"/>
    <property type="project" value="UniProtKB-UniRule"/>
</dbReference>
<dbReference type="CDD" id="cd00563">
    <property type="entry name" value="Dtyr_deacylase"/>
    <property type="match status" value="1"/>
</dbReference>
<dbReference type="FunFam" id="3.50.80.10:FF:000001">
    <property type="entry name" value="D-aminoacyl-tRNA deacylase"/>
    <property type="match status" value="1"/>
</dbReference>
<dbReference type="Gene3D" id="3.50.80.10">
    <property type="entry name" value="D-tyrosyl-tRNA(Tyr) deacylase"/>
    <property type="match status" value="1"/>
</dbReference>
<dbReference type="HAMAP" id="MF_00518">
    <property type="entry name" value="Deacylase_Dtd"/>
    <property type="match status" value="1"/>
</dbReference>
<dbReference type="InterPro" id="IPR003732">
    <property type="entry name" value="Daa-tRNA_deacyls_DTD"/>
</dbReference>
<dbReference type="InterPro" id="IPR023509">
    <property type="entry name" value="DTD-like_sf"/>
</dbReference>
<dbReference type="NCBIfam" id="TIGR00256">
    <property type="entry name" value="D-aminoacyl-tRNA deacylase"/>
    <property type="match status" value="1"/>
</dbReference>
<dbReference type="PANTHER" id="PTHR10472:SF5">
    <property type="entry name" value="D-AMINOACYL-TRNA DEACYLASE 1"/>
    <property type="match status" value="1"/>
</dbReference>
<dbReference type="PANTHER" id="PTHR10472">
    <property type="entry name" value="D-TYROSYL-TRNA TYR DEACYLASE"/>
    <property type="match status" value="1"/>
</dbReference>
<dbReference type="Pfam" id="PF02580">
    <property type="entry name" value="Tyr_Deacylase"/>
    <property type="match status" value="1"/>
</dbReference>
<dbReference type="SUPFAM" id="SSF69500">
    <property type="entry name" value="DTD-like"/>
    <property type="match status" value="1"/>
</dbReference>
<organism>
    <name type="scientific">Desulfatibacillum aliphaticivorans</name>
    <dbReference type="NCBI Taxonomy" id="218208"/>
    <lineage>
        <taxon>Bacteria</taxon>
        <taxon>Pseudomonadati</taxon>
        <taxon>Thermodesulfobacteriota</taxon>
        <taxon>Desulfobacteria</taxon>
        <taxon>Desulfobacterales</taxon>
        <taxon>Desulfatibacillaceae</taxon>
        <taxon>Desulfatibacillum</taxon>
    </lineage>
</organism>
<keyword id="KW-0963">Cytoplasm</keyword>
<keyword id="KW-0378">Hydrolase</keyword>
<keyword id="KW-1185">Reference proteome</keyword>
<keyword id="KW-0694">RNA-binding</keyword>
<keyword id="KW-0820">tRNA-binding</keyword>
<comment type="function">
    <text evidence="1">An aminoacyl-tRNA editing enzyme that deacylates mischarged D-aminoacyl-tRNAs. Also deacylates mischarged glycyl-tRNA(Ala), protecting cells against glycine mischarging by AlaRS. Acts via tRNA-based rather than protein-based catalysis; rejects L-amino acids rather than detecting D-amino acids in the active site. By recycling D-aminoacyl-tRNA to D-amino acids and free tRNA molecules, this enzyme counteracts the toxicity associated with the formation of D-aminoacyl-tRNA entities in vivo and helps enforce protein L-homochirality.</text>
</comment>
<comment type="catalytic activity">
    <reaction evidence="1">
        <text>glycyl-tRNA(Ala) + H2O = tRNA(Ala) + glycine + H(+)</text>
        <dbReference type="Rhea" id="RHEA:53744"/>
        <dbReference type="Rhea" id="RHEA-COMP:9657"/>
        <dbReference type="Rhea" id="RHEA-COMP:13640"/>
        <dbReference type="ChEBI" id="CHEBI:15377"/>
        <dbReference type="ChEBI" id="CHEBI:15378"/>
        <dbReference type="ChEBI" id="CHEBI:57305"/>
        <dbReference type="ChEBI" id="CHEBI:78442"/>
        <dbReference type="ChEBI" id="CHEBI:78522"/>
        <dbReference type="EC" id="3.1.1.96"/>
    </reaction>
</comment>
<comment type="catalytic activity">
    <reaction evidence="1">
        <text>a D-aminoacyl-tRNA + H2O = a tRNA + a D-alpha-amino acid + H(+)</text>
        <dbReference type="Rhea" id="RHEA:13953"/>
        <dbReference type="Rhea" id="RHEA-COMP:10123"/>
        <dbReference type="Rhea" id="RHEA-COMP:10124"/>
        <dbReference type="ChEBI" id="CHEBI:15377"/>
        <dbReference type="ChEBI" id="CHEBI:15378"/>
        <dbReference type="ChEBI" id="CHEBI:59871"/>
        <dbReference type="ChEBI" id="CHEBI:78442"/>
        <dbReference type="ChEBI" id="CHEBI:79333"/>
        <dbReference type="EC" id="3.1.1.96"/>
    </reaction>
</comment>
<comment type="subunit">
    <text evidence="1">Homodimer.</text>
</comment>
<comment type="subcellular location">
    <subcellularLocation>
        <location evidence="1">Cytoplasm</location>
    </subcellularLocation>
</comment>
<comment type="domain">
    <text evidence="1">A Gly-cisPro motif from one monomer fits into the active site of the other monomer to allow specific chiral rejection of L-amino acids.</text>
</comment>
<comment type="similarity">
    <text evidence="1">Belongs to the DTD family.</text>
</comment>